<reference key="1">
    <citation type="submission" date="2001-04" db="EMBL/GenBank/DDBJ databases">
        <authorList>
            <person name="Bair C.-H."/>
            <person name="Chang W."/>
        </authorList>
    </citation>
    <scope>NUCLEOTIDE SEQUENCE [MRNA]</scope>
    <source>
        <tissue>Ovary</tissue>
    </source>
</reference>
<evidence type="ECO:0000250" key="1"/>
<evidence type="ECO:0000250" key="2">
    <source>
        <dbReference type="UniProtKB" id="Q8WTT2"/>
    </source>
</evidence>
<evidence type="ECO:0000255" key="3"/>
<evidence type="ECO:0000256" key="4">
    <source>
        <dbReference type="SAM" id="MobiDB-lite"/>
    </source>
</evidence>
<evidence type="ECO:0000305" key="5"/>
<proteinExistence type="evidence at transcript level"/>
<organism>
    <name type="scientific">Cricetulus griseus</name>
    <name type="common">Chinese hamster</name>
    <name type="synonym">Cricetulus barabensis griseus</name>
    <dbReference type="NCBI Taxonomy" id="10029"/>
    <lineage>
        <taxon>Eukaryota</taxon>
        <taxon>Metazoa</taxon>
        <taxon>Chordata</taxon>
        <taxon>Craniata</taxon>
        <taxon>Vertebrata</taxon>
        <taxon>Euteleostomi</taxon>
        <taxon>Mammalia</taxon>
        <taxon>Eutheria</taxon>
        <taxon>Euarchontoglires</taxon>
        <taxon>Glires</taxon>
        <taxon>Rodentia</taxon>
        <taxon>Myomorpha</taxon>
        <taxon>Muroidea</taxon>
        <taxon>Cricetidae</taxon>
        <taxon>Cricetinae</taxon>
        <taxon>Cricetulus</taxon>
    </lineage>
</organism>
<dbReference type="EMBL" id="AF371372">
    <property type="protein sequence ID" value="AAK53433.1"/>
    <property type="molecule type" value="mRNA"/>
</dbReference>
<dbReference type="RefSeq" id="NP_001231221.1">
    <property type="nucleotide sequence ID" value="NM_001244292.1"/>
</dbReference>
<dbReference type="SMR" id="Q91Y26"/>
<dbReference type="PaxDb" id="10029-NP_001231221.1"/>
<dbReference type="GeneID" id="100689254"/>
<dbReference type="KEGG" id="cge:100689254"/>
<dbReference type="CTD" id="64318"/>
<dbReference type="eggNOG" id="KOG2153">
    <property type="taxonomic scope" value="Eukaryota"/>
</dbReference>
<dbReference type="OrthoDB" id="10263597at2759"/>
<dbReference type="Proteomes" id="UP000694386">
    <property type="component" value="Unplaced"/>
</dbReference>
<dbReference type="Proteomes" id="UP001108280">
    <property type="component" value="Chromosome 3"/>
</dbReference>
<dbReference type="GO" id="GO:0005730">
    <property type="term" value="C:nucleolus"/>
    <property type="evidence" value="ECO:0007669"/>
    <property type="project" value="UniProtKB-SubCell"/>
</dbReference>
<dbReference type="GO" id="GO:0003682">
    <property type="term" value="F:chromatin binding"/>
    <property type="evidence" value="ECO:0007669"/>
    <property type="project" value="TreeGrafter"/>
</dbReference>
<dbReference type="GO" id="GO:0006270">
    <property type="term" value="P:DNA replication initiation"/>
    <property type="evidence" value="ECO:0007669"/>
    <property type="project" value="TreeGrafter"/>
</dbReference>
<dbReference type="InterPro" id="IPR016024">
    <property type="entry name" value="ARM-type_fold"/>
</dbReference>
<dbReference type="InterPro" id="IPR005612">
    <property type="entry name" value="CCAAT-binding_factor"/>
</dbReference>
<dbReference type="InterPro" id="IPR011501">
    <property type="entry name" value="Noc3_N"/>
</dbReference>
<dbReference type="InterPro" id="IPR016903">
    <property type="entry name" value="Nucleolar_cplx-assoc_3"/>
</dbReference>
<dbReference type="PANTHER" id="PTHR14428">
    <property type="entry name" value="NUCLEOLAR COMPLEX PROTEIN 3"/>
    <property type="match status" value="1"/>
</dbReference>
<dbReference type="PANTHER" id="PTHR14428:SF5">
    <property type="entry name" value="NUCLEOLAR COMPLEX PROTEIN 3 HOMOLOG"/>
    <property type="match status" value="1"/>
</dbReference>
<dbReference type="Pfam" id="PF03914">
    <property type="entry name" value="CBF"/>
    <property type="match status" value="1"/>
</dbReference>
<dbReference type="Pfam" id="PF07540">
    <property type="entry name" value="NOC3p"/>
    <property type="match status" value="1"/>
</dbReference>
<dbReference type="PIRSF" id="PIRSF028977">
    <property type="entry name" value="Nucleolar_complex_p3"/>
    <property type="match status" value="1"/>
</dbReference>
<dbReference type="SUPFAM" id="SSF48371">
    <property type="entry name" value="ARM repeat"/>
    <property type="match status" value="1"/>
</dbReference>
<name>NOC3L_CRIGR</name>
<feature type="chain" id="PRO_0000173473" description="Nucleolar complex protein 3 homolog">
    <location>
        <begin position="1"/>
        <end position="800"/>
    </location>
</feature>
<feature type="region of interest" description="Disordered" evidence="4">
    <location>
        <begin position="37"/>
        <end position="90"/>
    </location>
</feature>
<feature type="coiled-coil region" evidence="3">
    <location>
        <begin position="450"/>
        <end position="489"/>
    </location>
</feature>
<feature type="compositionally biased region" description="Basic residues" evidence="4">
    <location>
        <begin position="40"/>
        <end position="51"/>
    </location>
</feature>
<feature type="compositionally biased region" description="Basic and acidic residues" evidence="4">
    <location>
        <begin position="52"/>
        <end position="77"/>
    </location>
</feature>
<feature type="compositionally biased region" description="Acidic residues" evidence="4">
    <location>
        <begin position="78"/>
        <end position="90"/>
    </location>
</feature>
<feature type="cross-link" description="Glycyl lysine isopeptide (Lys-Gly) (interchain with G-Cter in SUMO2)" evidence="2">
    <location>
        <position position="333"/>
    </location>
</feature>
<accession>Q91Y26</accession>
<gene>
    <name type="primary">NOC3L</name>
</gene>
<comment type="subcellular location">
    <subcellularLocation>
        <location evidence="1">Nucleus</location>
        <location evidence="1">Nucleolus</location>
    </subcellularLocation>
</comment>
<comment type="similarity">
    <text evidence="5">Belongs to the CBF/MAK21 family.</text>
</comment>
<keyword id="KW-0175">Coiled coil</keyword>
<keyword id="KW-1017">Isopeptide bond</keyword>
<keyword id="KW-0539">Nucleus</keyword>
<keyword id="KW-0832">Ubl conjugation</keyword>
<protein>
    <recommendedName>
        <fullName>Nucleolar complex protein 3 homolog</fullName>
        <shortName>NOC3 protein homolog</shortName>
    </recommendedName>
    <alternativeName>
        <fullName>NOC3-like protein</fullName>
    </alternativeName>
    <alternativeName>
        <fullName>Nucleolar complex-associated protein 3-like protein</fullName>
    </alternativeName>
</protein>
<sequence length="800" mass="92471">MKARRNKKQVPSFRKLIKTSKVKLEYKLKNKQFKQQSTIKKYRKEQRKLRQAVKDAVSKKPFPLEDPKSKRPVKGMEREEEDEEDQALPLDMMDDDDLQLMKDLGQKASFLTRDLSSSEPVHIKKRKHESVIDKYEKMPRTLQTAPEKELIHLLPIKDKSGIIPQTREKPVTDIQQEEEDEEELEVEEEVVENPIQELTIEEHLIVRKKKLQEKKIQIATLASSILSDPESNIKKLKELRSMLMEQDPDVAVTVRKLVIISLMELFKDITPSYKIRPLTEAEKSTKIRKETQKLREFEEGLVSQYKFYLENLEQIVKDWKQRKLKKSNVVSLKAYKGLAEVAVKSLCELLVALPHFNFHNNIIVLIVPLMNDGSKLVSEMCCEAVKKLFKQDKLGQASLGVIKVISGFVKGRNYEVRPEMLKTFLCLRIKEVEVKKDTEDINKPKKFMTFKEKRKTLSRMQRKWKKAEEKLERELREAEASESTERKLKLHTETLNIVFVTYFRILKKAQRSPLLPAVLEGLAKFAHLINVEFFDDLLVVLHTLIESGDLSYQESLHCVQTAFHILSGQGDVLNIDPMKFYTHLYKTLFKLHAGATNDGIEIVLHCLDVMLSKRRKQVSHQRALAFIKRLCTLALQVLPNSSIGLLATTRILMHTFPRTDLLLDNESQGSGVFLPELEEPEYCNAQNTALWELHALRRHYHPVVQRFAVHLLAGAPSEGSEALKPELSRRSAVELFEAYSMAAMTFNPPVEPSNSKKKDKLLQGDSFLNEDLNQLIKRYCNEVTTEIPLDFTKCLKTSVQ</sequence>